<comment type="function">
    <text>Not known, interfere with mitotic chromosome segregation when overexpressed.</text>
</comment>
<comment type="similarity">
    <text evidence="3">Belongs to the UBR7 family.</text>
</comment>
<dbReference type="EMBL" id="L42550">
    <property type="protein sequence ID" value="AAB41271.1"/>
    <property type="molecule type" value="mRNA"/>
</dbReference>
<dbReference type="EMBL" id="CU329671">
    <property type="protein sequence ID" value="CAB58404.1"/>
    <property type="molecule type" value="Genomic_DNA"/>
</dbReference>
<dbReference type="PIR" id="T40419">
    <property type="entry name" value="T40419"/>
</dbReference>
<dbReference type="RefSeq" id="NP_595478.1">
    <property type="nucleotide sequence ID" value="NM_001021389.2"/>
</dbReference>
<dbReference type="SMR" id="Q09329"/>
<dbReference type="BioGRID" id="277126">
    <property type="interactions" value="16"/>
</dbReference>
<dbReference type="FunCoup" id="Q09329">
    <property type="interactions" value="669"/>
</dbReference>
<dbReference type="STRING" id="284812.Q09329"/>
<dbReference type="iPTMnet" id="Q09329"/>
<dbReference type="PaxDb" id="4896-SPBC4.05.1"/>
<dbReference type="EnsemblFungi" id="SPBC4.05.1">
    <property type="protein sequence ID" value="SPBC4.05.1:pep"/>
    <property type="gene ID" value="SPBC4.05"/>
</dbReference>
<dbReference type="GeneID" id="2540600"/>
<dbReference type="KEGG" id="spo:2540600"/>
<dbReference type="PomBase" id="SPBC4.05">
    <property type="gene designation" value="mlo2"/>
</dbReference>
<dbReference type="VEuPathDB" id="FungiDB:SPBC4.05"/>
<dbReference type="eggNOG" id="KOG2752">
    <property type="taxonomic scope" value="Eukaryota"/>
</dbReference>
<dbReference type="HOGENOM" id="CLU_025221_1_0_1"/>
<dbReference type="InParanoid" id="Q09329"/>
<dbReference type="OMA" id="DCGTERQ"/>
<dbReference type="PhylomeDB" id="Q09329"/>
<dbReference type="PRO" id="PR:Q09329"/>
<dbReference type="Proteomes" id="UP000002485">
    <property type="component" value="Chromosome II"/>
</dbReference>
<dbReference type="GO" id="GO:0000785">
    <property type="term" value="C:chromatin"/>
    <property type="evidence" value="ECO:0007669"/>
    <property type="project" value="UniProtKB-ARBA"/>
</dbReference>
<dbReference type="GO" id="GO:0005829">
    <property type="term" value="C:cytosol"/>
    <property type="evidence" value="ECO:0007005"/>
    <property type="project" value="PomBase"/>
</dbReference>
<dbReference type="GO" id="GO:0005634">
    <property type="term" value="C:nucleus"/>
    <property type="evidence" value="ECO:0007005"/>
    <property type="project" value="PomBase"/>
</dbReference>
<dbReference type="GO" id="GO:0032991">
    <property type="term" value="C:protein-containing complex"/>
    <property type="evidence" value="ECO:0007669"/>
    <property type="project" value="UniProtKB-ARBA"/>
</dbReference>
<dbReference type="GO" id="GO:0061630">
    <property type="term" value="F:ubiquitin protein ligase activity"/>
    <property type="evidence" value="ECO:0000255"/>
    <property type="project" value="PomBase"/>
</dbReference>
<dbReference type="GO" id="GO:0008270">
    <property type="term" value="F:zinc ion binding"/>
    <property type="evidence" value="ECO:0007669"/>
    <property type="project" value="UniProtKB-KW"/>
</dbReference>
<dbReference type="GO" id="GO:0006338">
    <property type="term" value="P:chromatin remodeling"/>
    <property type="evidence" value="ECO:0007669"/>
    <property type="project" value="UniProtKB-ARBA"/>
</dbReference>
<dbReference type="CDD" id="cd15542">
    <property type="entry name" value="PHD_UBR7"/>
    <property type="match status" value="1"/>
</dbReference>
<dbReference type="CDD" id="cd19677">
    <property type="entry name" value="UBR-box_UBR7"/>
    <property type="match status" value="1"/>
</dbReference>
<dbReference type="FunFam" id="3.30.40.10:FF:000987">
    <property type="entry name" value="Putative E3 ubiquitin-protein ligase ubr7"/>
    <property type="match status" value="1"/>
</dbReference>
<dbReference type="Gene3D" id="3.30.40.10">
    <property type="entry name" value="Zinc/RING finger domain, C3HC4 (zinc finger)"/>
    <property type="match status" value="1"/>
</dbReference>
<dbReference type="InterPro" id="IPR040204">
    <property type="entry name" value="UBR7"/>
</dbReference>
<dbReference type="InterPro" id="IPR047506">
    <property type="entry name" value="UBR7-like_UBR-box"/>
</dbReference>
<dbReference type="InterPro" id="IPR019786">
    <property type="entry name" value="Zinc_finger_PHD-type_CS"/>
</dbReference>
<dbReference type="InterPro" id="IPR011011">
    <property type="entry name" value="Znf_FYVE_PHD"/>
</dbReference>
<dbReference type="InterPro" id="IPR001965">
    <property type="entry name" value="Znf_PHD"/>
</dbReference>
<dbReference type="InterPro" id="IPR019787">
    <property type="entry name" value="Znf_PHD-finger"/>
</dbReference>
<dbReference type="InterPro" id="IPR013083">
    <property type="entry name" value="Znf_RING/FYVE/PHD"/>
</dbReference>
<dbReference type="InterPro" id="IPR003126">
    <property type="entry name" value="Znf_UBR"/>
</dbReference>
<dbReference type="PANTHER" id="PTHR13513">
    <property type="entry name" value="E3 UBIQUITIN-PROTEIN LIGASE UBR7"/>
    <property type="match status" value="1"/>
</dbReference>
<dbReference type="PANTHER" id="PTHR13513:SF9">
    <property type="entry name" value="E3 UBIQUITIN-PROTEIN LIGASE UBR7-RELATED"/>
    <property type="match status" value="1"/>
</dbReference>
<dbReference type="Pfam" id="PF00628">
    <property type="entry name" value="PHD"/>
    <property type="match status" value="1"/>
</dbReference>
<dbReference type="Pfam" id="PF02207">
    <property type="entry name" value="zf-UBR"/>
    <property type="match status" value="1"/>
</dbReference>
<dbReference type="SMART" id="SM00249">
    <property type="entry name" value="PHD"/>
    <property type="match status" value="1"/>
</dbReference>
<dbReference type="SMART" id="SM00396">
    <property type="entry name" value="ZnF_UBR1"/>
    <property type="match status" value="1"/>
</dbReference>
<dbReference type="SUPFAM" id="SSF57903">
    <property type="entry name" value="FYVE/PHD zinc finger"/>
    <property type="match status" value="1"/>
</dbReference>
<dbReference type="PROSITE" id="PS01359">
    <property type="entry name" value="ZF_PHD_1"/>
    <property type="match status" value="1"/>
</dbReference>
<dbReference type="PROSITE" id="PS50016">
    <property type="entry name" value="ZF_PHD_2"/>
    <property type="match status" value="1"/>
</dbReference>
<dbReference type="PROSITE" id="PS51157">
    <property type="entry name" value="ZF_UBR"/>
    <property type="match status" value="1"/>
</dbReference>
<protein>
    <recommendedName>
        <fullName>Protein mlo2</fullName>
    </recommendedName>
</protein>
<gene>
    <name type="primary">mlo2</name>
    <name type="ORF">SPBC4.05</name>
</gene>
<sequence>MEETAHELTVKQYVEQQRELEREAREVLPYSFDTCTYSMGYLKQPLYACLTCQKASGSLNAVCYSCSISCHADHDLVDLFNKRHFRCDCGTTRTHSIPCNLRKSVDECGSENDYNHNFEGRFCICDTVYNPETEEGTMFQCILCEDWFHEKCLQKTNKGIAIPDAETFEWLVCSECSEKYRDHLLNQKHESIAGTERAPLFLSENFRENLCPCESCISLRNLEMPMLVAEEPIYEPPEDSEDGISEMNEDPSESGEMIEQVISSTMNDVLRILDRLPRVQANESVYAYNRLKSELTDFLTPFARENRVVTKEDISNFFLERSRISKNLR</sequence>
<organism>
    <name type="scientific">Schizosaccharomyces pombe (strain 972 / ATCC 24843)</name>
    <name type="common">Fission yeast</name>
    <dbReference type="NCBI Taxonomy" id="284812"/>
    <lineage>
        <taxon>Eukaryota</taxon>
        <taxon>Fungi</taxon>
        <taxon>Dikarya</taxon>
        <taxon>Ascomycota</taxon>
        <taxon>Taphrinomycotina</taxon>
        <taxon>Schizosaccharomycetes</taxon>
        <taxon>Schizosaccharomycetales</taxon>
        <taxon>Schizosaccharomycetaceae</taxon>
        <taxon>Schizosaccharomyces</taxon>
    </lineage>
</organism>
<feature type="chain" id="PRO_0000096500" description="Protein mlo2">
    <location>
        <begin position="1"/>
        <end position="329"/>
    </location>
</feature>
<feature type="zinc finger region" description="UBR-type" evidence="2">
    <location>
        <begin position="33"/>
        <end position="104"/>
    </location>
</feature>
<feature type="zinc finger region" description="PHD-type" evidence="1">
    <location>
        <begin position="120"/>
        <end position="179"/>
    </location>
</feature>
<keyword id="KW-0479">Metal-binding</keyword>
<keyword id="KW-1185">Reference proteome</keyword>
<keyword id="KW-0862">Zinc</keyword>
<keyword id="KW-0863">Zinc-finger</keyword>
<reference key="1">
    <citation type="journal article" date="1996" name="Nucleic Acids Res.">
        <title>Fission yeast genes which disrupt mitotic chromosome segregation when overexpressed.</title>
        <authorList>
            <person name="Javerzat J.-P."/>
            <person name="Cranston G."/>
            <person name="Allshire R.C."/>
        </authorList>
    </citation>
    <scope>NUCLEOTIDE SEQUENCE [MRNA]</scope>
    <source>
        <strain>972 / ATCC 24843</strain>
    </source>
</reference>
<reference key="2">
    <citation type="journal article" date="2002" name="Nature">
        <title>The genome sequence of Schizosaccharomyces pombe.</title>
        <authorList>
            <person name="Wood V."/>
            <person name="Gwilliam R."/>
            <person name="Rajandream M.A."/>
            <person name="Lyne M.H."/>
            <person name="Lyne R."/>
            <person name="Stewart A."/>
            <person name="Sgouros J.G."/>
            <person name="Peat N."/>
            <person name="Hayles J."/>
            <person name="Baker S.G."/>
            <person name="Basham D."/>
            <person name="Bowman S."/>
            <person name="Brooks K."/>
            <person name="Brown D."/>
            <person name="Brown S."/>
            <person name="Chillingworth T."/>
            <person name="Churcher C.M."/>
            <person name="Collins M."/>
            <person name="Connor R."/>
            <person name="Cronin A."/>
            <person name="Davis P."/>
            <person name="Feltwell T."/>
            <person name="Fraser A."/>
            <person name="Gentles S."/>
            <person name="Goble A."/>
            <person name="Hamlin N."/>
            <person name="Harris D.E."/>
            <person name="Hidalgo J."/>
            <person name="Hodgson G."/>
            <person name="Holroyd S."/>
            <person name="Hornsby T."/>
            <person name="Howarth S."/>
            <person name="Huckle E.J."/>
            <person name="Hunt S."/>
            <person name="Jagels K."/>
            <person name="James K.D."/>
            <person name="Jones L."/>
            <person name="Jones M."/>
            <person name="Leather S."/>
            <person name="McDonald S."/>
            <person name="McLean J."/>
            <person name="Mooney P."/>
            <person name="Moule S."/>
            <person name="Mungall K.L."/>
            <person name="Murphy L.D."/>
            <person name="Niblett D."/>
            <person name="Odell C."/>
            <person name="Oliver K."/>
            <person name="O'Neil S."/>
            <person name="Pearson D."/>
            <person name="Quail M.A."/>
            <person name="Rabbinowitsch E."/>
            <person name="Rutherford K.M."/>
            <person name="Rutter S."/>
            <person name="Saunders D."/>
            <person name="Seeger K."/>
            <person name="Sharp S."/>
            <person name="Skelton J."/>
            <person name="Simmonds M.N."/>
            <person name="Squares R."/>
            <person name="Squares S."/>
            <person name="Stevens K."/>
            <person name="Taylor K."/>
            <person name="Taylor R.G."/>
            <person name="Tivey A."/>
            <person name="Walsh S.V."/>
            <person name="Warren T."/>
            <person name="Whitehead S."/>
            <person name="Woodward J.R."/>
            <person name="Volckaert G."/>
            <person name="Aert R."/>
            <person name="Robben J."/>
            <person name="Grymonprez B."/>
            <person name="Weltjens I."/>
            <person name="Vanstreels E."/>
            <person name="Rieger M."/>
            <person name="Schaefer M."/>
            <person name="Mueller-Auer S."/>
            <person name="Gabel C."/>
            <person name="Fuchs M."/>
            <person name="Duesterhoeft A."/>
            <person name="Fritzc C."/>
            <person name="Holzer E."/>
            <person name="Moestl D."/>
            <person name="Hilbert H."/>
            <person name="Borzym K."/>
            <person name="Langer I."/>
            <person name="Beck A."/>
            <person name="Lehrach H."/>
            <person name="Reinhardt R."/>
            <person name="Pohl T.M."/>
            <person name="Eger P."/>
            <person name="Zimmermann W."/>
            <person name="Wedler H."/>
            <person name="Wambutt R."/>
            <person name="Purnelle B."/>
            <person name="Goffeau A."/>
            <person name="Cadieu E."/>
            <person name="Dreano S."/>
            <person name="Gloux S."/>
            <person name="Lelaure V."/>
            <person name="Mottier S."/>
            <person name="Galibert F."/>
            <person name="Aves S.J."/>
            <person name="Xiang Z."/>
            <person name="Hunt C."/>
            <person name="Moore K."/>
            <person name="Hurst S.M."/>
            <person name="Lucas M."/>
            <person name="Rochet M."/>
            <person name="Gaillardin C."/>
            <person name="Tallada V.A."/>
            <person name="Garzon A."/>
            <person name="Thode G."/>
            <person name="Daga R.R."/>
            <person name="Cruzado L."/>
            <person name="Jimenez J."/>
            <person name="Sanchez M."/>
            <person name="del Rey F."/>
            <person name="Benito J."/>
            <person name="Dominguez A."/>
            <person name="Revuelta J.L."/>
            <person name="Moreno S."/>
            <person name="Armstrong J."/>
            <person name="Forsburg S.L."/>
            <person name="Cerutti L."/>
            <person name="Lowe T."/>
            <person name="McCombie W.R."/>
            <person name="Paulsen I."/>
            <person name="Potashkin J."/>
            <person name="Shpakovski G.V."/>
            <person name="Ussery D."/>
            <person name="Barrell B.G."/>
            <person name="Nurse P."/>
        </authorList>
    </citation>
    <scope>NUCLEOTIDE SEQUENCE [LARGE SCALE GENOMIC DNA]</scope>
    <source>
        <strain>972 / ATCC 24843</strain>
    </source>
</reference>
<proteinExistence type="evidence at transcript level"/>
<name>MLO2_SCHPO</name>
<evidence type="ECO:0000255" key="1">
    <source>
        <dbReference type="PROSITE-ProRule" id="PRU00146"/>
    </source>
</evidence>
<evidence type="ECO:0000255" key="2">
    <source>
        <dbReference type="PROSITE-ProRule" id="PRU00508"/>
    </source>
</evidence>
<evidence type="ECO:0000305" key="3"/>
<accession>Q09329</accession>